<proteinExistence type="evidence at protein level"/>
<keyword id="KW-0002">3D-structure</keyword>
<keyword id="KW-0042">Antenna complex</keyword>
<keyword id="KW-0089">Bile pigment</keyword>
<keyword id="KW-0150">Chloroplast</keyword>
<keyword id="KW-0157">Chromophore</keyword>
<keyword id="KW-0249">Electron transport</keyword>
<keyword id="KW-0472">Membrane</keyword>
<keyword id="KW-0488">Methylation</keyword>
<keyword id="KW-0602">Photosynthesis</keyword>
<keyword id="KW-0605">Phycobilisome</keyword>
<keyword id="KW-0934">Plastid</keyword>
<keyword id="KW-0793">Thylakoid</keyword>
<keyword id="KW-0813">Transport</keyword>
<name>PHCB_POLUR</name>
<sequence length="172" mass="18001">MLDAFAKVVAQADARGEFLSNTQIDALLAIVSEGNKRLDVVNKITNNASAIVTNAARALFAEQPQLISPGGNAYTSRRMAACLRDMEIVLRYVSYAMIAGDASVLDDRCLNGLRETYQALGTPGASVAVAIQKMKDAALALVNDTTGTPAGDCASLVAEIATYFDRAAAAVA</sequence>
<accession>P59859</accession>
<comment type="function">
    <text evidence="2">Light-harvesting photosynthetic tetrapyrrole chromophore-protein from the phycobiliprotein complex (phycobilisome, PBS). Phycocyanin is the major phycobiliprotein in the PBS rod.</text>
</comment>
<comment type="subunit">
    <text evidence="2">Heterododecamer of 6 alpha and 6 beta chains. The basic functional unit of phycobiliproteins is a ring-shaped hexamer formed from two back-to-back trimers contacting via the alpha chain subunits. The trimers are composed of alpha/beta subunit heterodimers arranged around a three-fold axis of symmetry. The phycoerythrins also contain a gamma subunit which is located in the center of the hexamer.</text>
</comment>
<comment type="subcellular location">
    <subcellularLocation>
        <location>Plastid</location>
        <location>Chloroplast thylakoid membrane</location>
        <topology>Peripheral membrane protein</topology>
        <orientation>Stromal side</orientation>
    </subcellularLocation>
    <text>Part of the phycobilisome rod.</text>
</comment>
<comment type="PTM">
    <text evidence="2">Contains one covalently linked phycocyanobilin chromophore and one covalently linked phycoerythrobilin chromophore.</text>
</comment>
<comment type="miscellaneous">
    <text>The light-harvesting antenna system in red algae and cyanobacteria is formed of phycobilisomes. These are composed of the phycobiliproteins phycoerythrin (CPE), phycocyanin (CPC) and allophycocyanin (APC). Cyanobacteria also contain phycoerythrocyanin (PCC). The phycobiliproteins all share the same subunit composition and organization with variations in the covalently bound open-chain tetrapyrrole chromophores. The phycobiliprotein complexes are arranged sequentially in antenna complexes linked by linker proteins with CPE at the periphery, CPC in the middle and APC at the core feeding to the photosynthetic reaction center.</text>
</comment>
<comment type="similarity">
    <text evidence="3">Belongs to the phycobiliprotein family.</text>
</comment>
<dbReference type="PDB" id="1F99">
    <property type="method" value="X-ray"/>
    <property type="resolution" value="2.40 A"/>
    <property type="chains" value="B/L/N=1-172"/>
</dbReference>
<dbReference type="PDBsum" id="1F99"/>
<dbReference type="SMR" id="P59859"/>
<dbReference type="EvolutionaryTrace" id="P59859"/>
<dbReference type="GO" id="GO:0009535">
    <property type="term" value="C:chloroplast thylakoid membrane"/>
    <property type="evidence" value="ECO:0007669"/>
    <property type="project" value="UniProtKB-SubCell"/>
</dbReference>
<dbReference type="GO" id="GO:0030089">
    <property type="term" value="C:phycobilisome"/>
    <property type="evidence" value="ECO:0007669"/>
    <property type="project" value="UniProtKB-KW"/>
</dbReference>
<dbReference type="GO" id="GO:0015979">
    <property type="term" value="P:photosynthesis"/>
    <property type="evidence" value="ECO:0007669"/>
    <property type="project" value="UniProtKB-KW"/>
</dbReference>
<dbReference type="CDD" id="cd14768">
    <property type="entry name" value="PC_PEC_beta"/>
    <property type="match status" value="1"/>
</dbReference>
<dbReference type="Gene3D" id="1.10.490.20">
    <property type="entry name" value="Phycocyanins"/>
    <property type="match status" value="1"/>
</dbReference>
<dbReference type="InterPro" id="IPR009050">
    <property type="entry name" value="Globin-like_sf"/>
</dbReference>
<dbReference type="InterPro" id="IPR012128">
    <property type="entry name" value="Phycobilisome_asu/bsu"/>
</dbReference>
<dbReference type="InterPro" id="IPR038719">
    <property type="entry name" value="Phycobilisome_asu/bsu_sf"/>
</dbReference>
<dbReference type="InterPro" id="IPR006247">
    <property type="entry name" value="Phycocyanin_b"/>
</dbReference>
<dbReference type="NCBIfam" id="TIGR01339">
    <property type="entry name" value="phycocy_beta"/>
    <property type="match status" value="1"/>
</dbReference>
<dbReference type="PANTHER" id="PTHR34011:SF7">
    <property type="entry name" value="C-PHYCOCYANIN BETA SUBUNIT"/>
    <property type="match status" value="1"/>
</dbReference>
<dbReference type="PANTHER" id="PTHR34011">
    <property type="entry name" value="PHYCOBILISOME 32.1 KDA LINKER POLYPEPTIDE, PHYCOCYANIN-ASSOCIATED, ROD 2-RELATED"/>
    <property type="match status" value="1"/>
</dbReference>
<dbReference type="Pfam" id="PF00502">
    <property type="entry name" value="Phycobilisome"/>
    <property type="match status" value="1"/>
</dbReference>
<dbReference type="PIRSF" id="PIRSF000081">
    <property type="entry name" value="Phycocyanin"/>
    <property type="match status" value="1"/>
</dbReference>
<dbReference type="SUPFAM" id="SSF46458">
    <property type="entry name" value="Globin-like"/>
    <property type="match status" value="1"/>
</dbReference>
<feature type="chain" id="PRO_0000199162" description="R-phycocyanin beta chain">
    <location>
        <begin position="1"/>
        <end position="172"/>
    </location>
</feature>
<feature type="binding site" evidence="2">
    <location>
        <position position="35"/>
    </location>
    <ligand>
        <name>(2R,3E)-phycoerythrobilin</name>
        <dbReference type="ChEBI" id="CHEBI:85276"/>
    </ligand>
</feature>
<feature type="binding site" evidence="2">
    <location>
        <position position="39"/>
    </location>
    <ligand>
        <name>(2R,3E)-phycoerythrobilin</name>
        <dbReference type="ChEBI" id="CHEBI:85276"/>
    </ligand>
</feature>
<feature type="binding site" evidence="2">
    <location>
        <position position="72"/>
    </location>
    <ligand>
        <name>(2R,3E)-phycocyanobilin</name>
        <dbReference type="ChEBI" id="CHEBI:85275"/>
    </ligand>
</feature>
<feature type="binding site" description="covalent" evidence="2">
    <location>
        <position position="82"/>
    </location>
    <ligand>
        <name>(2R,3E)-phycocyanobilin</name>
        <dbReference type="ChEBI" id="CHEBI:85275"/>
    </ligand>
</feature>
<feature type="binding site">
    <location>
        <begin position="84"/>
        <end position="85"/>
    </location>
    <ligand>
        <name>(2R,3E)-phycocyanobilin</name>
        <dbReference type="ChEBI" id="CHEBI:85275"/>
    </ligand>
</feature>
<feature type="binding site">
    <location>
        <begin position="149"/>
        <end position="151"/>
    </location>
    <ligand>
        <name>(2R,3E)-phycoerythrobilin</name>
        <dbReference type="ChEBI" id="CHEBI:85276"/>
    </ligand>
</feature>
<feature type="binding site" description="covalent" evidence="2">
    <location>
        <position position="153"/>
    </location>
    <ligand>
        <name>(2R,3E)-phycoerythrobilin</name>
        <dbReference type="ChEBI" id="CHEBI:85276"/>
    </ligand>
</feature>
<feature type="modified residue" description="N4-methylasparagine" evidence="1">
    <location>
        <position position="72"/>
    </location>
</feature>
<feature type="helix" evidence="4">
    <location>
        <begin position="4"/>
        <end position="14"/>
    </location>
</feature>
<feature type="helix" evidence="4">
    <location>
        <begin position="21"/>
        <end position="32"/>
    </location>
</feature>
<feature type="helix" evidence="4">
    <location>
        <begin position="34"/>
        <end position="45"/>
    </location>
</feature>
<feature type="helix" evidence="4">
    <location>
        <begin position="48"/>
        <end position="62"/>
    </location>
</feature>
<feature type="helix" evidence="4">
    <location>
        <begin position="64"/>
        <end position="66"/>
    </location>
</feature>
<feature type="helix" evidence="4">
    <location>
        <begin position="76"/>
        <end position="99"/>
    </location>
</feature>
<feature type="helix" evidence="4">
    <location>
        <begin position="103"/>
        <end position="108"/>
    </location>
</feature>
<feature type="turn" evidence="4">
    <location>
        <begin position="109"/>
        <end position="112"/>
    </location>
</feature>
<feature type="helix" evidence="4">
    <location>
        <begin position="113"/>
        <end position="120"/>
    </location>
</feature>
<feature type="helix" evidence="4">
    <location>
        <begin position="124"/>
        <end position="142"/>
    </location>
</feature>
<feature type="strand" evidence="4">
    <location>
        <begin position="146"/>
        <end position="148"/>
    </location>
</feature>
<feature type="helix" evidence="4">
    <location>
        <begin position="154"/>
        <end position="171"/>
    </location>
</feature>
<geneLocation type="chloroplast"/>
<gene>
    <name type="primary">rpcB</name>
</gene>
<reference key="1">
    <citation type="journal article" date="2001" name="Biophys. J.">
        <title>Crystal structure of R-phycocyanin and possible energy transfer pathways in the phycobilisome.</title>
        <authorList>
            <person name="Jiang T."/>
            <person name="Zhang J.P."/>
            <person name="Chang W.R."/>
            <person name="Liang D.C."/>
        </authorList>
    </citation>
    <scope>X-RAY CRYSTALLOGRAPHY (2.4 ANGSTROMS) IN COMPLEX WITH RPCA; PHYCOCYANOBILIN AND PHYCOERYTHROBILIN</scope>
    <scope>FUNCTION</scope>
    <scope>SUBUNIT</scope>
</reference>
<protein>
    <recommendedName>
        <fullName>R-phycocyanin beta chain</fullName>
    </recommendedName>
</protein>
<evidence type="ECO:0000250" key="1"/>
<evidence type="ECO:0000269" key="2">
    <source>
    </source>
</evidence>
<evidence type="ECO:0000305" key="3"/>
<evidence type="ECO:0007829" key="4">
    <source>
        <dbReference type="PDB" id="1F99"/>
    </source>
</evidence>
<organism>
    <name type="scientific">Polysiphonia urceolata</name>
    <name type="common">Red alga</name>
    <name type="synonym">Conferva urceolata</name>
    <dbReference type="NCBI Taxonomy" id="173545"/>
    <lineage>
        <taxon>Eukaryota</taxon>
        <taxon>Rhodophyta</taxon>
        <taxon>Florideophyceae</taxon>
        <taxon>Rhodymeniophycidae</taxon>
        <taxon>Ceramiales</taxon>
        <taxon>Rhodomelaceae</taxon>
        <taxon>Polysiphonioideae</taxon>
        <taxon>Polysiphonia</taxon>
    </lineage>
</organism>